<sequence length="1059" mass="117635">MEQASVPSYVNIPPIAKTRSTSHLAPTPEHHRSVSYEDTTTASTSTDSVPEVRIRSESSQVSRESPPIRASKAFVASYEYEAQKDDELNLPLGAIITLVTVETNEDGWYRGELNGKVGLFPSNYAREVTYKDNLVEFKQDEIMLPVAVRTLSDCQIGHGATATVFKMDIKIKKELQNGRMGEAVGDQMKAALKRFNRHASNFRADVVSTDEQLEQLKREANLVNGLSHNNIVRLLGICLEDPYFGLLLELCEGSSLRNVCRNLNSDAAIPLGVLIDWATQVAEGMEYLTKQGYVHRDLKADNVLVKEEVCLCMDEEMFQYAYCLKCGKRPFDKLQLKITDFGVTRKMTADANRFSTAGTYAWLAPEAFKEGTWSEASDVWSYGVVLWELLTREEPYQGHIPATIAFQIANKGQNLSIGDSCPDRWKKLMQDCWNLEPNFRPKFSTLAISFKQYAKEFKDTHLQRAPSKMAVKELYSECFADKTKEEFEKRFHDLYAGSGDINRKNRHSIAPETKARRLKHHKPKKADITGPTEVKHILSVQKDDKNFRVKTYDQSSTGGTLPRLNERQSTLSLSSPDLFHISNLISGSNTVGHSAHRISRKNAIRHKKNQHRMFESPVVSPTMDDSNTFSTIDNADEVDPNHSKESKKGGTLSRAWAKLPWNKRDSKEDHDERAVAGSISSRSSSTTSSNRLITGQTTRGASAAGLLEIGARSRAQSTADGWEDPNTTKKHKVSPSDKRPVKTTNQTERYVKDLEKDTPLRPAQLPPTHRKSALDQTIPASPNSPDSINNFHPMPLSSRRTTANSSSDGAPCYDALVSHSYGAGHGHKNHFGLSDTIPLFPEEPTHYDMGPGRPFGTNGRAIVNQGGDYYGNISGQNYEGFGHGRSINQSTQYYPVGGGCDDYIPIVQKTVIKPTVGEVGNSPYSENIRCATRNVQNPQYIQCKKNQNPRRIPALPMKIQSESNLVTSGMVFTPRDEQLNGIGNSLSSLSLNEPPDIPAPLPPVVTYPIPASLISPSNRVSMSPPTRMAPVLPLGAMSSPRIMDKEILKNSSVEGTEIY</sequence>
<reference evidence="15" key="1">
    <citation type="journal article" date="1998" name="Science">
        <title>Genome sequence of the nematode C. elegans: a platform for investigating biology.</title>
        <authorList>
            <consortium name="The C. elegans sequencing consortium"/>
        </authorList>
    </citation>
    <scope>NUCLEOTIDE SEQUENCE [LARGE SCALE GENOMIC DNA]</scope>
    <source>
        <strain evidence="14 15">Bristol N2</strain>
    </source>
</reference>
<reference evidence="13" key="2">
    <citation type="journal article" date="2004" name="EMBO J.">
        <title>The Caenorhabditis elegans MAPK phosphatase VHP-1 mediates a novel JNK-like signaling pathway in stress response.</title>
        <authorList>
            <person name="Mizuno T."/>
            <person name="Hisamoto N."/>
            <person name="Terada T."/>
            <person name="Kondo T."/>
            <person name="Adachi M."/>
            <person name="Nishida E."/>
            <person name="Kim D.H."/>
            <person name="Ausubel F.M."/>
            <person name="Matsumoto K."/>
        </authorList>
    </citation>
    <scope>FUNCTION</scope>
    <scope>CATALYTIC ACTIVITY</scope>
    <scope>MUTAGENESIS OF GLY-253</scope>
</reference>
<reference evidence="13" key="3">
    <citation type="journal article" date="2008" name="Mol. Cell. Biol.">
        <title>Role of the Caenorhabditis elegans Shc adaptor protein in the c-Jun N-terminal kinase signaling pathway.</title>
        <authorList>
            <person name="Mizuno T."/>
            <person name="Fujiki K."/>
            <person name="Sasakawa A."/>
            <person name="Hisamoto N."/>
            <person name="Matsumoto K."/>
        </authorList>
    </citation>
    <scope>FUNCTION</scope>
    <scope>INTERACTION WITH SHC-1</scope>
    <scope>TISSUE SPECIFICITY</scope>
    <scope>MOTIF</scope>
    <scope>PHOSPHORYLATION AT TYR-940</scope>
    <scope>MUTAGENESIS OF TYR-940</scope>
</reference>
<reference evidence="13" key="4">
    <citation type="journal article" date="2010" name="Mol. Cell. Biol.">
        <title>The Caenorhabditis elegans Ste20-related kinase and Rac-type small GTPase regulate the c-Jun N-terminal kinase signaling pathway mediating the stress response.</title>
        <authorList>
            <person name="Fujiki K."/>
            <person name="Mizuno T."/>
            <person name="Hisamoto N."/>
            <person name="Matsumoto K."/>
        </authorList>
    </citation>
    <scope>FUNCTION</scope>
    <scope>CATALYTIC ACTIVITY</scope>
    <scope>ACTIVITY REGULATION</scope>
    <scope>INTERACTION WITH MAX-2</scope>
    <scope>PHOSPHORYLATION AT SER-355</scope>
    <scope>MUTAGENESIS OF LYS-193 AND SER-355</scope>
</reference>
<reference evidence="13" key="5">
    <citation type="journal article" date="2011" name="Proc. Natl. Acad. Sci. U.S.A.">
        <title>Axon regeneration requires coordinate activation of p38 and JNK MAPK pathways.</title>
        <authorList>
            <person name="Nix P."/>
            <person name="Hisamoto N."/>
            <person name="Matsumoto K."/>
            <person name="Bastiani M."/>
        </authorList>
    </citation>
    <scope>FUNCTION</scope>
    <scope>UBIQUITINATION</scope>
</reference>
<reference evidence="13" key="6">
    <citation type="journal article" date="2012" name="Nat. Commun.">
        <title>Endocannabinoid-Goalpha signalling inhibits axon regeneration in Caenorhabditis elegans by antagonizing Gqalpha-PKC-JNK signalling.</title>
        <authorList>
            <person name="Pastuhov S.I."/>
            <person name="Fujiki K."/>
            <person name="Nix P."/>
            <person name="Kanao S."/>
            <person name="Bastiani M."/>
            <person name="Matsumoto K."/>
            <person name="Hisamoto N."/>
        </authorList>
    </citation>
    <scope>FUNCTION</scope>
    <scope>ACTIVITY REGULATION</scope>
    <scope>INTERACTION WITH TPA-1</scope>
    <scope>PHOSPHORYLATION AT SER-355</scope>
    <scope>MUTAGENESIS OF SER-355</scope>
</reference>
<reference evidence="13" key="7">
    <citation type="journal article" date="2012" name="Nat. Neurosci.">
        <title>The growth factor SVH-1 regulates axon regeneration in C. elegans via the JNK MAPK cascade.</title>
        <authorList>
            <person name="Li C."/>
            <person name="Hisamoto N."/>
            <person name="Nix P."/>
            <person name="Kanao S."/>
            <person name="Mizuno T."/>
            <person name="Bastiani M."/>
            <person name="Matsumoto K."/>
        </authorList>
    </citation>
    <scope>FUNCTION</scope>
    <scope>ACTIVITY REGULATION</scope>
    <scope>INTERACTION WITH SVH-2</scope>
    <scope>PHOSPHORYLATION</scope>
</reference>
<reference key="8">
    <citation type="journal article" date="2016" name="PLoS Genet.">
        <title>The C. elegans discoidin domain receptor DDR-2 modulates the Met-like RTK-JNK signaling pathway in axon regeneration.</title>
        <authorList>
            <person name="Hisamoto N."/>
            <person name="Nagamori Y."/>
            <person name="Shimizu T."/>
            <person name="Pastuhov S.I."/>
            <person name="Matsumoto K."/>
        </authorList>
    </citation>
    <scope>PHOSPHORYLATION</scope>
</reference>
<keyword id="KW-0025">Alternative splicing</keyword>
<keyword id="KW-0067">ATP-binding</keyword>
<keyword id="KW-0175">Coiled coil</keyword>
<keyword id="KW-0418">Kinase</keyword>
<keyword id="KW-0460">Magnesium</keyword>
<keyword id="KW-0479">Metal-binding</keyword>
<keyword id="KW-0547">Nucleotide-binding</keyword>
<keyword id="KW-0597">Phosphoprotein</keyword>
<keyword id="KW-1185">Reference proteome</keyword>
<keyword id="KW-0723">Serine/threonine-protein kinase</keyword>
<keyword id="KW-0728">SH3 domain</keyword>
<keyword id="KW-0346">Stress response</keyword>
<keyword id="KW-0808">Transferase</keyword>
<keyword id="KW-0832">Ubl conjugation</keyword>
<accession>A0A0K3AV08</accession>
<accession>A0A0K3AS83</accession>
<accession>H2KYR3</accession>
<accession>Q8T7Z0</accession>
<evidence type="ECO:0000250" key="1">
    <source>
        <dbReference type="UniProtKB" id="P80192"/>
    </source>
</evidence>
<evidence type="ECO:0000255" key="2"/>
<evidence type="ECO:0000255" key="3">
    <source>
        <dbReference type="PROSITE-ProRule" id="PRU00159"/>
    </source>
</evidence>
<evidence type="ECO:0000255" key="4">
    <source>
        <dbReference type="PROSITE-ProRule" id="PRU00192"/>
    </source>
</evidence>
<evidence type="ECO:0000256" key="5">
    <source>
        <dbReference type="SAM" id="MobiDB-lite"/>
    </source>
</evidence>
<evidence type="ECO:0000269" key="6">
    <source>
    </source>
</evidence>
<evidence type="ECO:0000269" key="7">
    <source>
    </source>
</evidence>
<evidence type="ECO:0000269" key="8">
    <source>
    </source>
</evidence>
<evidence type="ECO:0000269" key="9">
    <source>
    </source>
</evidence>
<evidence type="ECO:0000269" key="10">
    <source>
    </source>
</evidence>
<evidence type="ECO:0000269" key="11">
    <source>
    </source>
</evidence>
<evidence type="ECO:0000269" key="12">
    <source>
    </source>
</evidence>
<evidence type="ECO:0000305" key="13"/>
<evidence type="ECO:0000312" key="14">
    <source>
        <dbReference type="EMBL" id="CTQ86850.1"/>
    </source>
</evidence>
<evidence type="ECO:0000312" key="15">
    <source>
        <dbReference type="Proteomes" id="UP000001940"/>
    </source>
</evidence>
<evidence type="ECO:0000312" key="16">
    <source>
        <dbReference type="WormBase" id="K11D12.10a"/>
    </source>
</evidence>
<evidence type="ECO:0000312" key="17">
    <source>
        <dbReference type="WormBase" id="K11D12.10b"/>
    </source>
</evidence>
<evidence type="ECO:0000312" key="18">
    <source>
        <dbReference type="WormBase" id="K11D12.10c"/>
    </source>
</evidence>
<evidence type="ECO:0000312" key="19">
    <source>
        <dbReference type="WormBase" id="K11D12.10d"/>
    </source>
</evidence>
<name>MLK1_CAEEL</name>
<organism evidence="15">
    <name type="scientific">Caenorhabditis elegans</name>
    <dbReference type="NCBI Taxonomy" id="6239"/>
    <lineage>
        <taxon>Eukaryota</taxon>
        <taxon>Metazoa</taxon>
        <taxon>Ecdysozoa</taxon>
        <taxon>Nematoda</taxon>
        <taxon>Chromadorea</taxon>
        <taxon>Rhabditida</taxon>
        <taxon>Rhabditina</taxon>
        <taxon>Rhabditomorpha</taxon>
        <taxon>Rhabditoidea</taxon>
        <taxon>Rhabditidae</taxon>
        <taxon>Peloderinae</taxon>
        <taxon>Caenorhabditis</taxon>
    </lineage>
</organism>
<dbReference type="EC" id="2.7.11.25" evidence="6 8"/>
<dbReference type="EMBL" id="BX284605">
    <property type="protein sequence ID" value="CCD64404.1"/>
    <property type="molecule type" value="Genomic_DNA"/>
</dbReference>
<dbReference type="EMBL" id="BX284605">
    <property type="protein sequence ID" value="CCD64405.1"/>
    <property type="molecule type" value="Genomic_DNA"/>
</dbReference>
<dbReference type="EMBL" id="BX284605">
    <property type="protein sequence ID" value="CTQ86850.1"/>
    <property type="molecule type" value="Genomic_DNA"/>
</dbReference>
<dbReference type="EMBL" id="BX284605">
    <property type="protein sequence ID" value="CTQ86851.1"/>
    <property type="molecule type" value="Genomic_DNA"/>
</dbReference>
<dbReference type="RefSeq" id="NP_001300151.1">
    <molecule id="A0A0K3AV08-1"/>
    <property type="nucleotide sequence ID" value="NM_001313222.3"/>
</dbReference>
<dbReference type="RefSeq" id="NP_001300152.1">
    <molecule id="A0A0K3AV08-4"/>
    <property type="nucleotide sequence ID" value="NM_001313223.3"/>
</dbReference>
<dbReference type="RefSeq" id="NP_741536.1">
    <molecule id="A0A0K3AV08-3"/>
    <property type="nucleotide sequence ID" value="NM_171456.8"/>
</dbReference>
<dbReference type="RefSeq" id="NP_741537.1">
    <molecule id="A0A0K3AV08-2"/>
    <property type="nucleotide sequence ID" value="NM_171928.7"/>
</dbReference>
<dbReference type="SMR" id="A0A0K3AV08"/>
<dbReference type="DIP" id="DIP-25180N"/>
<dbReference type="FunCoup" id="A0A0K3AV08">
    <property type="interactions" value="180"/>
</dbReference>
<dbReference type="IntAct" id="A0A0K3AV08">
    <property type="interactions" value="4"/>
</dbReference>
<dbReference type="STRING" id="6239.K11D12.10c.1"/>
<dbReference type="iPTMnet" id="A0A0K3AV08"/>
<dbReference type="PaxDb" id="6239-K11D12.10a"/>
<dbReference type="EnsemblMetazoa" id="K11D12.10a.1">
    <molecule id="A0A0K3AV08-2"/>
    <property type="protein sequence ID" value="K11D12.10a.1"/>
    <property type="gene ID" value="WBGene00003374"/>
</dbReference>
<dbReference type="EnsemblMetazoa" id="K11D12.10b.1">
    <molecule id="A0A0K3AV08-3"/>
    <property type="protein sequence ID" value="K11D12.10b.1"/>
    <property type="gene ID" value="WBGene00003374"/>
</dbReference>
<dbReference type="EnsemblMetazoa" id="K11D12.10c.1">
    <molecule id="A0A0K3AV08-1"/>
    <property type="protein sequence ID" value="K11D12.10c.1"/>
    <property type="gene ID" value="WBGene00003374"/>
</dbReference>
<dbReference type="EnsemblMetazoa" id="K11D12.10d.1">
    <molecule id="A0A0K3AV08-4"/>
    <property type="protein sequence ID" value="K11D12.10d.1"/>
    <property type="gene ID" value="WBGene00003374"/>
</dbReference>
<dbReference type="GeneID" id="178895"/>
<dbReference type="KEGG" id="cel:CELE_K11D12.10"/>
<dbReference type="UCSC" id="K11D12.10b">
    <property type="organism name" value="c. elegans"/>
</dbReference>
<dbReference type="AGR" id="WB:WBGene00003374"/>
<dbReference type="CTD" id="178895"/>
<dbReference type="WormBase" id="K11D12.10a">
    <molecule id="A0A0K3AV08-2"/>
    <property type="protein sequence ID" value="CE30383"/>
    <property type="gene ID" value="WBGene00003374"/>
    <property type="gene designation" value="mlk-1"/>
</dbReference>
<dbReference type="WormBase" id="K11D12.10b">
    <molecule id="A0A0K3AV08-3"/>
    <property type="protein sequence ID" value="CE30384"/>
    <property type="gene ID" value="WBGene00003374"/>
    <property type="gene designation" value="mlk-1"/>
</dbReference>
<dbReference type="WormBase" id="K11D12.10c">
    <molecule id="A0A0K3AV08-1"/>
    <property type="protein sequence ID" value="CE50686"/>
    <property type="gene ID" value="WBGene00003374"/>
    <property type="gene designation" value="mlk-1"/>
</dbReference>
<dbReference type="WormBase" id="K11D12.10d">
    <molecule id="A0A0K3AV08-4"/>
    <property type="protein sequence ID" value="CE50749"/>
    <property type="gene ID" value="WBGene00003374"/>
    <property type="gene designation" value="mlk-1"/>
</dbReference>
<dbReference type="eggNOG" id="KOG0192">
    <property type="taxonomic scope" value="Eukaryota"/>
</dbReference>
<dbReference type="GeneTree" id="ENSGT00940000163262"/>
<dbReference type="InParanoid" id="A0A0K3AV08"/>
<dbReference type="OMA" id="YAWLAPE"/>
<dbReference type="OrthoDB" id="339325at2759"/>
<dbReference type="SignaLink" id="A0A0K3AV08"/>
<dbReference type="PRO" id="PR:A0A0K3AV08"/>
<dbReference type="Proteomes" id="UP000001940">
    <property type="component" value="Chromosome V"/>
</dbReference>
<dbReference type="Bgee" id="WBGene00003374">
    <property type="expression patterns" value="Expressed in pharyngeal muscle cell (C elegans) and 3 other cell types or tissues"/>
</dbReference>
<dbReference type="GO" id="GO:0005737">
    <property type="term" value="C:cytoplasm"/>
    <property type="evidence" value="ECO:0000318"/>
    <property type="project" value="GO_Central"/>
</dbReference>
<dbReference type="GO" id="GO:0005524">
    <property type="term" value="F:ATP binding"/>
    <property type="evidence" value="ECO:0007669"/>
    <property type="project" value="UniProtKB-KW"/>
</dbReference>
<dbReference type="GO" id="GO:0004709">
    <property type="term" value="F:MAP kinase kinase kinase activity"/>
    <property type="evidence" value="ECO:0007669"/>
    <property type="project" value="UniProtKB-EC"/>
</dbReference>
<dbReference type="GO" id="GO:0046872">
    <property type="term" value="F:metal ion binding"/>
    <property type="evidence" value="ECO:0007669"/>
    <property type="project" value="UniProtKB-KW"/>
</dbReference>
<dbReference type="GO" id="GO:0004672">
    <property type="term" value="F:protein kinase activity"/>
    <property type="evidence" value="ECO:0000318"/>
    <property type="project" value="GO_Central"/>
</dbReference>
<dbReference type="GO" id="GO:0019901">
    <property type="term" value="F:protein kinase binding"/>
    <property type="evidence" value="ECO:0000353"/>
    <property type="project" value="WormBase"/>
</dbReference>
<dbReference type="GO" id="GO:0005080">
    <property type="term" value="F:protein kinase C binding"/>
    <property type="evidence" value="ECO:0000353"/>
    <property type="project" value="UniProtKB"/>
</dbReference>
<dbReference type="GO" id="GO:0106310">
    <property type="term" value="F:protein serine kinase activity"/>
    <property type="evidence" value="ECO:0007669"/>
    <property type="project" value="RHEA"/>
</dbReference>
<dbReference type="GO" id="GO:0030971">
    <property type="term" value="F:receptor tyrosine kinase binding"/>
    <property type="evidence" value="ECO:0000353"/>
    <property type="project" value="UniProtKB"/>
</dbReference>
<dbReference type="GO" id="GO:0097110">
    <property type="term" value="F:scaffold protein binding"/>
    <property type="evidence" value="ECO:0000353"/>
    <property type="project" value="UniProtKB"/>
</dbReference>
<dbReference type="GO" id="GO:0031103">
    <property type="term" value="P:axon regeneration"/>
    <property type="evidence" value="ECO:0000316"/>
    <property type="project" value="UniProtKB"/>
</dbReference>
<dbReference type="GO" id="GO:0050829">
    <property type="term" value="P:defense response to Gram-negative bacterium"/>
    <property type="evidence" value="ECO:0000315"/>
    <property type="project" value="UniProtKB"/>
</dbReference>
<dbReference type="GO" id="GO:0008340">
    <property type="term" value="P:determination of adult lifespan"/>
    <property type="evidence" value="ECO:0000315"/>
    <property type="project" value="UniProtKB"/>
</dbReference>
<dbReference type="GO" id="GO:0007254">
    <property type="term" value="P:JNK cascade"/>
    <property type="evidence" value="ECO:0000315"/>
    <property type="project" value="UniProtKB"/>
</dbReference>
<dbReference type="GO" id="GO:0000165">
    <property type="term" value="P:MAPK cascade"/>
    <property type="evidence" value="ECO:0000315"/>
    <property type="project" value="UniProtKB"/>
</dbReference>
<dbReference type="GO" id="GO:0038066">
    <property type="term" value="P:p38MAPK cascade"/>
    <property type="evidence" value="ECO:0000315"/>
    <property type="project" value="WormBase"/>
</dbReference>
<dbReference type="GO" id="GO:0048691">
    <property type="term" value="P:positive regulation of axon extension involved in regeneration"/>
    <property type="evidence" value="ECO:0000315"/>
    <property type="project" value="UniProtKB"/>
</dbReference>
<dbReference type="GO" id="GO:0048680">
    <property type="term" value="P:positive regulation of axon regeneration"/>
    <property type="evidence" value="ECO:0000315"/>
    <property type="project" value="UniProtKB"/>
</dbReference>
<dbReference type="GO" id="GO:0001934">
    <property type="term" value="P:positive regulation of protein phosphorylation"/>
    <property type="evidence" value="ECO:0000315"/>
    <property type="project" value="UniProtKB"/>
</dbReference>
<dbReference type="GO" id="GO:0046688">
    <property type="term" value="P:response to copper ion"/>
    <property type="evidence" value="ECO:0000315"/>
    <property type="project" value="WormBase"/>
</dbReference>
<dbReference type="GO" id="GO:0042594">
    <property type="term" value="P:response to starvation"/>
    <property type="evidence" value="ECO:0000315"/>
    <property type="project" value="UniProtKB"/>
</dbReference>
<dbReference type="GO" id="GO:0007165">
    <property type="term" value="P:signal transduction"/>
    <property type="evidence" value="ECO:0000318"/>
    <property type="project" value="GO_Central"/>
</dbReference>
<dbReference type="FunFam" id="2.30.30.40:FF:000033">
    <property type="entry name" value="FCH and double SH3 domains protein 2"/>
    <property type="match status" value="1"/>
</dbReference>
<dbReference type="FunFam" id="1.10.510.10:FF:002752">
    <property type="entry name" value="Mitogen-activated protein kinase kinase kinase mlk-1"/>
    <property type="match status" value="1"/>
</dbReference>
<dbReference type="Gene3D" id="2.30.30.40">
    <property type="entry name" value="SH3 Domains"/>
    <property type="match status" value="1"/>
</dbReference>
<dbReference type="Gene3D" id="1.10.510.10">
    <property type="entry name" value="Transferase(Phosphotransferase) domain 1"/>
    <property type="match status" value="1"/>
</dbReference>
<dbReference type="InterPro" id="IPR011009">
    <property type="entry name" value="Kinase-like_dom_sf"/>
</dbReference>
<dbReference type="InterPro" id="IPR000719">
    <property type="entry name" value="Prot_kinase_dom"/>
</dbReference>
<dbReference type="InterPro" id="IPR050122">
    <property type="entry name" value="RTK"/>
</dbReference>
<dbReference type="InterPro" id="IPR001245">
    <property type="entry name" value="Ser-Thr/Tyr_kinase_cat_dom"/>
</dbReference>
<dbReference type="InterPro" id="IPR008271">
    <property type="entry name" value="Ser/Thr_kinase_AS"/>
</dbReference>
<dbReference type="InterPro" id="IPR036028">
    <property type="entry name" value="SH3-like_dom_sf"/>
</dbReference>
<dbReference type="InterPro" id="IPR001452">
    <property type="entry name" value="SH3_domain"/>
</dbReference>
<dbReference type="PANTHER" id="PTHR24416">
    <property type="entry name" value="TYROSINE-PROTEIN KINASE RECEPTOR"/>
    <property type="match status" value="1"/>
</dbReference>
<dbReference type="PANTHER" id="PTHR24416:SF611">
    <property type="entry name" value="TYROSINE-PROTEIN KINASE TRANSMEMBRANE RECEPTOR ROR"/>
    <property type="match status" value="1"/>
</dbReference>
<dbReference type="Pfam" id="PF07714">
    <property type="entry name" value="PK_Tyr_Ser-Thr"/>
    <property type="match status" value="1"/>
</dbReference>
<dbReference type="Pfam" id="PF14604">
    <property type="entry name" value="SH3_9"/>
    <property type="match status" value="1"/>
</dbReference>
<dbReference type="SMART" id="SM00220">
    <property type="entry name" value="S_TKc"/>
    <property type="match status" value="1"/>
</dbReference>
<dbReference type="SMART" id="SM00326">
    <property type="entry name" value="SH3"/>
    <property type="match status" value="1"/>
</dbReference>
<dbReference type="SUPFAM" id="SSF56112">
    <property type="entry name" value="Protein kinase-like (PK-like)"/>
    <property type="match status" value="1"/>
</dbReference>
<dbReference type="SUPFAM" id="SSF50044">
    <property type="entry name" value="SH3-domain"/>
    <property type="match status" value="1"/>
</dbReference>
<dbReference type="PROSITE" id="PS50011">
    <property type="entry name" value="PROTEIN_KINASE_DOM"/>
    <property type="match status" value="1"/>
</dbReference>
<dbReference type="PROSITE" id="PS00108">
    <property type="entry name" value="PROTEIN_KINASE_ST"/>
    <property type="match status" value="1"/>
</dbReference>
<dbReference type="PROSITE" id="PS50002">
    <property type="entry name" value="SH3"/>
    <property type="match status" value="1"/>
</dbReference>
<proteinExistence type="evidence at protein level"/>
<comment type="function">
    <text evidence="6 7 8 9 10 11">Serine/threonine-protein kinase which, by phosphorylating and activating mek-1, plays an important role in the activation of the JNK pathway composed of mlk-1, mek-1 and kgb-1 (PubMed:15116070, PubMed:20008556). Involved in the response to environmental stress such as heavy metals (PubMed:15116070, PubMed:18809575). By activating the JNK pathway downstream of tyrosine receptor svh-2, plays a role in axon regeneration after injury (PubMed:21670305, PubMed:22388962, PubMed:23072806).</text>
</comment>
<comment type="catalytic activity">
    <reaction evidence="6 8">
        <text>L-seryl-[protein] + ATP = O-phospho-L-seryl-[protein] + ADP + H(+)</text>
        <dbReference type="Rhea" id="RHEA:17989"/>
        <dbReference type="Rhea" id="RHEA-COMP:9863"/>
        <dbReference type="Rhea" id="RHEA-COMP:11604"/>
        <dbReference type="ChEBI" id="CHEBI:15378"/>
        <dbReference type="ChEBI" id="CHEBI:29999"/>
        <dbReference type="ChEBI" id="CHEBI:30616"/>
        <dbReference type="ChEBI" id="CHEBI:83421"/>
        <dbReference type="ChEBI" id="CHEBI:456216"/>
        <dbReference type="EC" id="2.7.11.25"/>
    </reaction>
</comment>
<comment type="catalytic activity">
    <reaction evidence="6 8">
        <text>L-threonyl-[protein] + ATP = O-phospho-L-threonyl-[protein] + ADP + H(+)</text>
        <dbReference type="Rhea" id="RHEA:46608"/>
        <dbReference type="Rhea" id="RHEA-COMP:11060"/>
        <dbReference type="Rhea" id="RHEA-COMP:11605"/>
        <dbReference type="ChEBI" id="CHEBI:15378"/>
        <dbReference type="ChEBI" id="CHEBI:30013"/>
        <dbReference type="ChEBI" id="CHEBI:30616"/>
        <dbReference type="ChEBI" id="CHEBI:61977"/>
        <dbReference type="ChEBI" id="CHEBI:456216"/>
        <dbReference type="EC" id="2.7.11.25"/>
    </reaction>
</comment>
<comment type="cofactor">
    <cofactor evidence="1">
        <name>Mg(2+)</name>
        <dbReference type="ChEBI" id="CHEBI:18420"/>
    </cofactor>
</comment>
<comment type="activity regulation">
    <text evidence="8 10 11">Activated by phosphorylation at Ser-355 (PubMed:20008556). May be activated by svh-2-mediated phosphorylation (PubMed:22388962, PubMed:23072806).</text>
</comment>
<comment type="subunit">
    <text evidence="7 8 10 11">Interacts with max-2; the interaction is independent of max-2 and mlk-1 kinase activities (PubMed:20008556). May interact (via NPQY motif when phosphorylated on tyrosine residue) with shc-1 (via PID domain); the interaction may facilitate mek-1 phosphorylation by bringing mlk-1 and mek-1 together (PubMed:18809575). Interacts with svh-2 (via cytoplasmic domain) (PubMed:22388962). Interacts with tpa-1 (PubMed:23072806).</text>
</comment>
<comment type="alternative products">
    <event type="alternative splicing"/>
    <isoform>
        <id>A0A0K3AV08-1</id>
        <name evidence="18">c</name>
        <sequence type="displayed"/>
    </isoform>
    <isoform>
        <id>A0A0K3AV08-2</id>
        <name evidence="16">a</name>
        <sequence type="described" ref="VSP_058148"/>
    </isoform>
    <isoform>
        <id>A0A0K3AV08-3</id>
        <name evidence="17">b</name>
        <sequence type="described" ref="VSP_058147"/>
    </isoform>
    <isoform>
        <id>A0A0K3AV08-4</id>
        <name evidence="19">d</name>
        <sequence type="described" ref="VSP_058147 VSP_058148"/>
    </isoform>
</comment>
<comment type="tissue specificity">
    <text evidence="7">Expressed in pharynx, intestine, hypodermis, neurons and body muscles.</text>
</comment>
<comment type="PTM">
    <text evidence="10 12">May be phosphorylated on tyrosine residues by svh-2.</text>
</comment>
<comment type="PTM">
    <text evidence="9">May be ubiquitinated and targeted for proteasomal degradation by E3 ubiquitin ligase rpm-1.</text>
</comment>
<comment type="similarity">
    <text evidence="13">Belongs to the protein kinase superfamily. STE Ser/Thr protein kinase family. MAP kinase kinase kinase subfamily.</text>
</comment>
<feature type="chain" id="PRO_0000435680" description="Mitogen-activated protein kinase kinase kinase mlk-1" evidence="13">
    <location>
        <begin position="1"/>
        <end position="1059"/>
    </location>
</feature>
<feature type="domain" description="SH3" evidence="4">
    <location>
        <begin position="69"/>
        <end position="130"/>
    </location>
</feature>
<feature type="domain" description="Protein kinase" evidence="3">
    <location>
        <begin position="150"/>
        <end position="454"/>
    </location>
</feature>
<feature type="region of interest" description="Disordered" evidence="5">
    <location>
        <begin position="1"/>
        <end position="66"/>
    </location>
</feature>
<feature type="region of interest" description="Disordered" evidence="5">
    <location>
        <begin position="617"/>
        <end position="699"/>
    </location>
</feature>
<feature type="region of interest" description="Disordered" evidence="5">
    <location>
        <begin position="714"/>
        <end position="808"/>
    </location>
</feature>
<feature type="coiled-coil region" evidence="2">
    <location>
        <begin position="199"/>
        <end position="224"/>
    </location>
</feature>
<feature type="short sequence motif" description="NPQY motif" evidence="7">
    <location>
        <begin position="937"/>
        <end position="940"/>
    </location>
</feature>
<feature type="compositionally biased region" description="Low complexity" evidence="5">
    <location>
        <begin position="38"/>
        <end position="48"/>
    </location>
</feature>
<feature type="compositionally biased region" description="Polar residues" evidence="5">
    <location>
        <begin position="623"/>
        <end position="633"/>
    </location>
</feature>
<feature type="compositionally biased region" description="Basic and acidic residues" evidence="5">
    <location>
        <begin position="639"/>
        <end position="648"/>
    </location>
</feature>
<feature type="compositionally biased region" description="Basic and acidic residues" evidence="5">
    <location>
        <begin position="662"/>
        <end position="674"/>
    </location>
</feature>
<feature type="compositionally biased region" description="Low complexity" evidence="5">
    <location>
        <begin position="678"/>
        <end position="689"/>
    </location>
</feature>
<feature type="compositionally biased region" description="Polar residues" evidence="5">
    <location>
        <begin position="690"/>
        <end position="699"/>
    </location>
</feature>
<feature type="compositionally biased region" description="Basic and acidic residues" evidence="5">
    <location>
        <begin position="749"/>
        <end position="759"/>
    </location>
</feature>
<feature type="compositionally biased region" description="Polar residues" evidence="5">
    <location>
        <begin position="774"/>
        <end position="790"/>
    </location>
</feature>
<feature type="compositionally biased region" description="Polar residues" evidence="5">
    <location>
        <begin position="798"/>
        <end position="808"/>
    </location>
</feature>
<feature type="active site" description="Proton acceptor" evidence="3">
    <location>
        <position position="297"/>
    </location>
</feature>
<feature type="binding site" evidence="3">
    <location>
        <begin position="156"/>
        <end position="164"/>
    </location>
    <ligand>
        <name>ATP</name>
        <dbReference type="ChEBI" id="CHEBI:30616"/>
    </ligand>
</feature>
<feature type="binding site" evidence="3">
    <location>
        <position position="193"/>
    </location>
    <ligand>
        <name>ATP</name>
        <dbReference type="ChEBI" id="CHEBI:30616"/>
    </ligand>
</feature>
<feature type="modified residue" description="Phosphoserine; by max-2 and tpa-1" evidence="8 11">
    <location>
        <position position="355"/>
    </location>
</feature>
<feature type="modified residue" description="Phosphotyrosine" evidence="7">
    <location>
        <position position="940"/>
    </location>
</feature>
<feature type="splice variant" id="VSP_058147" description="In isoform b and isoform d." evidence="13">
    <location>
        <begin position="551"/>
        <end position="631"/>
    </location>
</feature>
<feature type="splice variant" id="VSP_058148" description="In isoform a and isoform d." evidence="13">
    <original>NTTKKHKVSPSDKRPVKTTNQTE</original>
    <variation>NTTK</variation>
    <location>
        <begin position="726"/>
        <end position="748"/>
    </location>
</feature>
<feature type="mutagenesis site" description="Loss of kinase activity. No effect on the interaction with max-2. No effect on phosphorylation of Ser-355 by max-2." evidence="8">
    <original>K</original>
    <variation>R</variation>
    <location>
        <position position="193"/>
    </location>
</feature>
<feature type="mutagenesis site" description="In km701; rescues growth arrest at larval L2-L3 stages in vhp-1 km20 mutant." evidence="6">
    <original>G</original>
    <variation>R</variation>
    <location>
        <position position="253"/>
    </location>
</feature>
<feature type="mutagenesis site" description="Abolishes phosphorylation by max-2. Loss of kinase activity. No effect on the interaction with max-2. Loss of resistance to heavy metal ions such as Cu(2+). Impaired axon regeneration after injury." evidence="8 11">
    <original>S</original>
    <variation>A</variation>
    <location>
        <position position="355"/>
    </location>
</feature>
<feature type="mutagenesis site" description="Phosphomimetic mutant which probably causes constitutive kinase activation and results in mek-1 phosphorylation. Resistance to arachidonoyl ethanolamide (AEA)-mediated inhibition of axon regeneration after injury." evidence="8 11">
    <original>S</original>
    <variation>E</variation>
    <variation>D</variation>
    <location>
        <position position="355"/>
    </location>
</feature>
<feature type="mutagenesis site" description="May abolish interaction with shc-2. Severe loss of resistance to heavy metal ions such as Cu(2+)." evidence="7">
    <original>Y</original>
    <variation>F</variation>
    <location>
        <position position="940"/>
    </location>
</feature>
<protein>
    <recommendedName>
        <fullName evidence="13">Mitogen-activated protein kinase kinase kinase mlk-1</fullName>
        <ecNumber evidence="6 8">2.7.11.25</ecNumber>
    </recommendedName>
    <alternativeName>
        <fullName evidence="14">Mixed lineage kinase homolog 1</fullName>
    </alternativeName>
</protein>
<gene>
    <name evidence="14" type="primary">mlk-1</name>
    <name evidence="14" type="ORF">K11D12.10</name>
</gene>